<feature type="chain" id="PRO_0000112570" description="Ethylene-responsive transcription factor TINY">
    <location>
        <begin position="1"/>
        <end position="218"/>
    </location>
</feature>
<feature type="DNA-binding region" description="AP2/ERF" evidence="2">
    <location>
        <begin position="35"/>
        <end position="92"/>
    </location>
</feature>
<feature type="region of interest" description="Disordered" evidence="3">
    <location>
        <begin position="1"/>
        <end position="37"/>
    </location>
</feature>
<feature type="short sequence motif" description="Nuclear localization signal" evidence="1">
    <location>
        <begin position="40"/>
        <end position="58"/>
    </location>
</feature>
<feature type="compositionally biased region" description="Polar residues" evidence="3">
    <location>
        <begin position="1"/>
        <end position="10"/>
    </location>
</feature>
<feature type="compositionally biased region" description="Basic and acidic residues" evidence="3">
    <location>
        <begin position="17"/>
        <end position="32"/>
    </location>
</feature>
<sequence length="218" mass="23942">MIASESTKSWEASAVRQENEEEKKKPVKDSGKHPVYRGVRKRNWGKWVSEIREPRKKSRIWLGTFPSPEMAARAHDVAALSIKGASAILNFPDLAGSFPRPSSLSPRDIQVAALKAAHMETSQSFSSSSSLTFSSSQSSSSLESLVSSSATGSEELGEIVELPSLGSSYDGLTQLGNEFIFSDSADLWPYPPQWSEGDYQMIPASLSQDWDLQGLYNY</sequence>
<gene>
    <name type="primary">TINY</name>
    <name type="synonym">ERF040</name>
    <name type="ordered locus">At5g25810</name>
    <name type="ORF">F18A17.60</name>
</gene>
<comment type="function">
    <text>Putative transcriptional activator.</text>
</comment>
<comment type="subcellular location">
    <subcellularLocation>
        <location evidence="5">Nucleus</location>
    </subcellularLocation>
</comment>
<comment type="induction">
    <text evidence="4">Slightly induced by cold stress.</text>
</comment>
<comment type="similarity">
    <text evidence="5">Belongs to the AP2/ERF transcription factor family. ERF subfamily.</text>
</comment>
<name>TINY_ARATH</name>
<dbReference type="EMBL" id="X94698">
    <property type="protein sequence ID" value="CAA64359.1"/>
    <property type="molecule type" value="mRNA"/>
</dbReference>
<dbReference type="EMBL" id="AY560855">
    <property type="protein sequence ID" value="AAT44922.1"/>
    <property type="molecule type" value="mRNA"/>
</dbReference>
<dbReference type="EMBL" id="AC005405">
    <property type="protein sequence ID" value="AAC29139.1"/>
    <property type="molecule type" value="Genomic_DNA"/>
</dbReference>
<dbReference type="EMBL" id="CP002688">
    <property type="protein sequence ID" value="AED93490.1"/>
    <property type="molecule type" value="Genomic_DNA"/>
</dbReference>
<dbReference type="EMBL" id="BT024923">
    <property type="protein sequence ID" value="ABD94079.1"/>
    <property type="molecule type" value="mRNA"/>
</dbReference>
<dbReference type="PIR" id="T01076">
    <property type="entry name" value="T01076"/>
</dbReference>
<dbReference type="RefSeq" id="NP_197953.1">
    <property type="nucleotide sequence ID" value="NM_122482.3"/>
</dbReference>
<dbReference type="SMR" id="Q39127"/>
<dbReference type="BioGRID" id="17925">
    <property type="interactions" value="2"/>
</dbReference>
<dbReference type="FunCoup" id="Q39127">
    <property type="interactions" value="11"/>
</dbReference>
<dbReference type="IntAct" id="Q39127">
    <property type="interactions" value="2"/>
</dbReference>
<dbReference type="STRING" id="3702.Q39127"/>
<dbReference type="PaxDb" id="3702-AT5G25810.1"/>
<dbReference type="EnsemblPlants" id="AT5G25810.1">
    <property type="protein sequence ID" value="AT5G25810.1"/>
    <property type="gene ID" value="AT5G25810"/>
</dbReference>
<dbReference type="GeneID" id="832650"/>
<dbReference type="Gramene" id="AT5G25810.1">
    <property type="protein sequence ID" value="AT5G25810.1"/>
    <property type="gene ID" value="AT5G25810"/>
</dbReference>
<dbReference type="KEGG" id="ath:AT5G25810"/>
<dbReference type="Araport" id="AT5G25810"/>
<dbReference type="TAIR" id="AT5G25810">
    <property type="gene designation" value="TNY"/>
</dbReference>
<dbReference type="eggNOG" id="ENOG502RNX7">
    <property type="taxonomic scope" value="Eukaryota"/>
</dbReference>
<dbReference type="HOGENOM" id="CLU_063331_3_0_1"/>
<dbReference type="InParanoid" id="Q39127"/>
<dbReference type="OMA" id="YPPQWSE"/>
<dbReference type="OrthoDB" id="1932364at2759"/>
<dbReference type="PhylomeDB" id="Q39127"/>
<dbReference type="PRO" id="PR:Q39127"/>
<dbReference type="Proteomes" id="UP000006548">
    <property type="component" value="Chromosome 5"/>
</dbReference>
<dbReference type="ExpressionAtlas" id="Q39127">
    <property type="expression patterns" value="baseline and differential"/>
</dbReference>
<dbReference type="GO" id="GO:0005634">
    <property type="term" value="C:nucleus"/>
    <property type="evidence" value="ECO:0007669"/>
    <property type="project" value="UniProtKB-SubCell"/>
</dbReference>
<dbReference type="GO" id="GO:0003700">
    <property type="term" value="F:DNA-binding transcription factor activity"/>
    <property type="evidence" value="ECO:0000250"/>
    <property type="project" value="TAIR"/>
</dbReference>
<dbReference type="GO" id="GO:0000976">
    <property type="term" value="F:transcription cis-regulatory region binding"/>
    <property type="evidence" value="ECO:0000353"/>
    <property type="project" value="TAIR"/>
</dbReference>
<dbReference type="CDD" id="cd00018">
    <property type="entry name" value="AP2"/>
    <property type="match status" value="1"/>
</dbReference>
<dbReference type="FunFam" id="3.30.730.10:FF:000001">
    <property type="entry name" value="Ethylene-responsive transcription factor 2"/>
    <property type="match status" value="1"/>
</dbReference>
<dbReference type="Gene3D" id="3.30.730.10">
    <property type="entry name" value="AP2/ERF domain"/>
    <property type="match status" value="1"/>
</dbReference>
<dbReference type="InterPro" id="IPR001471">
    <property type="entry name" value="AP2/ERF_dom"/>
</dbReference>
<dbReference type="InterPro" id="IPR036955">
    <property type="entry name" value="AP2/ERF_dom_sf"/>
</dbReference>
<dbReference type="InterPro" id="IPR051032">
    <property type="entry name" value="AP2/ERF_TF_ERF_subfamily"/>
</dbReference>
<dbReference type="InterPro" id="IPR016177">
    <property type="entry name" value="DNA-bd_dom_sf"/>
</dbReference>
<dbReference type="PANTHER" id="PTHR31985">
    <property type="entry name" value="ETHYLENE-RESPONSIVE TRANSCRIPTION FACTOR ERF042-RELATED"/>
    <property type="match status" value="1"/>
</dbReference>
<dbReference type="PANTHER" id="PTHR31985:SF213">
    <property type="entry name" value="ETHYLENE-RESPONSIVE TRANSCRIPTION FACTOR TINY"/>
    <property type="match status" value="1"/>
</dbReference>
<dbReference type="Pfam" id="PF00847">
    <property type="entry name" value="AP2"/>
    <property type="match status" value="1"/>
</dbReference>
<dbReference type="PRINTS" id="PR00367">
    <property type="entry name" value="ETHRSPELEMNT"/>
</dbReference>
<dbReference type="SMART" id="SM00380">
    <property type="entry name" value="AP2"/>
    <property type="match status" value="1"/>
</dbReference>
<dbReference type="SUPFAM" id="SSF54171">
    <property type="entry name" value="DNA-binding domain"/>
    <property type="match status" value="1"/>
</dbReference>
<dbReference type="PROSITE" id="PS51032">
    <property type="entry name" value="AP2_ERF"/>
    <property type="match status" value="1"/>
</dbReference>
<organism>
    <name type="scientific">Arabidopsis thaliana</name>
    <name type="common">Mouse-ear cress</name>
    <dbReference type="NCBI Taxonomy" id="3702"/>
    <lineage>
        <taxon>Eukaryota</taxon>
        <taxon>Viridiplantae</taxon>
        <taxon>Streptophyta</taxon>
        <taxon>Embryophyta</taxon>
        <taxon>Tracheophyta</taxon>
        <taxon>Spermatophyta</taxon>
        <taxon>Magnoliopsida</taxon>
        <taxon>eudicotyledons</taxon>
        <taxon>Gunneridae</taxon>
        <taxon>Pentapetalae</taxon>
        <taxon>rosids</taxon>
        <taxon>malvids</taxon>
        <taxon>Brassicales</taxon>
        <taxon>Brassicaceae</taxon>
        <taxon>Camelineae</taxon>
        <taxon>Arabidopsis</taxon>
    </lineage>
</organism>
<evidence type="ECO:0000255" key="1"/>
<evidence type="ECO:0000255" key="2">
    <source>
        <dbReference type="PROSITE-ProRule" id="PRU00366"/>
    </source>
</evidence>
<evidence type="ECO:0000256" key="3">
    <source>
        <dbReference type="SAM" id="MobiDB-lite"/>
    </source>
</evidence>
<evidence type="ECO:0000269" key="4">
    <source>
    </source>
</evidence>
<evidence type="ECO:0000305" key="5"/>
<keyword id="KW-0010">Activator</keyword>
<keyword id="KW-0238">DNA-binding</keyword>
<keyword id="KW-0539">Nucleus</keyword>
<keyword id="KW-1185">Reference proteome</keyword>
<keyword id="KW-0804">Transcription</keyword>
<keyword id="KW-0805">Transcription regulation</keyword>
<accession>Q39127</accession>
<accession>Q6J9S0</accession>
<proteinExistence type="evidence at transcript level"/>
<reference key="1">
    <citation type="journal article" date="1996" name="Plant Cell">
        <title>A Dissociation insertion causes a semidominant mutation that increases expression of TINY, an Arabidopsis gene related to APETALA2.</title>
        <authorList>
            <person name="Wilson K."/>
            <person name="Long D."/>
            <person name="Swinburne J."/>
            <person name="Coupland G."/>
        </authorList>
    </citation>
    <scope>NUCLEOTIDE SEQUENCE [MRNA]</scope>
    <source>
        <strain>cv. Columbia</strain>
    </source>
</reference>
<reference key="2">
    <citation type="submission" date="2004-02" db="EMBL/GenBank/DDBJ databases">
        <title>Molecular cloning, expression, phylogenetic and functional characterization of the Arabidopsis AP2/EREBP transcription factor family.</title>
        <authorList>
            <person name="Pan Y."/>
            <person name="Gong W."/>
            <person name="Liu D."/>
            <person name="Fu Q."/>
            <person name="Mei W.-Q."/>
            <person name="Song W.-Q."/>
            <person name="Ma L.-G."/>
            <person name="Luo J.-C."/>
            <person name="Deng X.-W."/>
            <person name="Zhu Y.-X."/>
        </authorList>
    </citation>
    <scope>NUCLEOTIDE SEQUENCE [MRNA]</scope>
</reference>
<reference key="3">
    <citation type="journal article" date="2000" name="Nature">
        <title>Sequence and analysis of chromosome 5 of the plant Arabidopsis thaliana.</title>
        <authorList>
            <person name="Tabata S."/>
            <person name="Kaneko T."/>
            <person name="Nakamura Y."/>
            <person name="Kotani H."/>
            <person name="Kato T."/>
            <person name="Asamizu E."/>
            <person name="Miyajima N."/>
            <person name="Sasamoto S."/>
            <person name="Kimura T."/>
            <person name="Hosouchi T."/>
            <person name="Kawashima K."/>
            <person name="Kohara M."/>
            <person name="Matsumoto M."/>
            <person name="Matsuno A."/>
            <person name="Muraki A."/>
            <person name="Nakayama S."/>
            <person name="Nakazaki N."/>
            <person name="Naruo K."/>
            <person name="Okumura S."/>
            <person name="Shinpo S."/>
            <person name="Takeuchi C."/>
            <person name="Wada T."/>
            <person name="Watanabe A."/>
            <person name="Yamada M."/>
            <person name="Yasuda M."/>
            <person name="Sato S."/>
            <person name="de la Bastide M."/>
            <person name="Huang E."/>
            <person name="Spiegel L."/>
            <person name="Gnoj L."/>
            <person name="O'Shaughnessy A."/>
            <person name="Preston R."/>
            <person name="Habermann K."/>
            <person name="Murray J."/>
            <person name="Johnson D."/>
            <person name="Rohlfing T."/>
            <person name="Nelson J."/>
            <person name="Stoneking T."/>
            <person name="Pepin K."/>
            <person name="Spieth J."/>
            <person name="Sekhon M."/>
            <person name="Armstrong J."/>
            <person name="Becker M."/>
            <person name="Belter E."/>
            <person name="Cordum H."/>
            <person name="Cordes M."/>
            <person name="Courtney L."/>
            <person name="Courtney W."/>
            <person name="Dante M."/>
            <person name="Du H."/>
            <person name="Edwards J."/>
            <person name="Fryman J."/>
            <person name="Haakensen B."/>
            <person name="Lamar E."/>
            <person name="Latreille P."/>
            <person name="Leonard S."/>
            <person name="Meyer R."/>
            <person name="Mulvaney E."/>
            <person name="Ozersky P."/>
            <person name="Riley A."/>
            <person name="Strowmatt C."/>
            <person name="Wagner-McPherson C."/>
            <person name="Wollam A."/>
            <person name="Yoakum M."/>
            <person name="Bell M."/>
            <person name="Dedhia N."/>
            <person name="Parnell L."/>
            <person name="Shah R."/>
            <person name="Rodriguez M."/>
            <person name="Hoon See L."/>
            <person name="Vil D."/>
            <person name="Baker J."/>
            <person name="Kirchoff K."/>
            <person name="Toth K."/>
            <person name="King L."/>
            <person name="Bahret A."/>
            <person name="Miller B."/>
            <person name="Marra M.A."/>
            <person name="Martienssen R."/>
            <person name="McCombie W.R."/>
            <person name="Wilson R.K."/>
            <person name="Murphy G."/>
            <person name="Bancroft I."/>
            <person name="Volckaert G."/>
            <person name="Wambutt R."/>
            <person name="Duesterhoeft A."/>
            <person name="Stiekema W."/>
            <person name="Pohl T."/>
            <person name="Entian K.-D."/>
            <person name="Terryn N."/>
            <person name="Hartley N."/>
            <person name="Bent E."/>
            <person name="Johnson S."/>
            <person name="Langham S.-A."/>
            <person name="McCullagh B."/>
            <person name="Robben J."/>
            <person name="Grymonprez B."/>
            <person name="Zimmermann W."/>
            <person name="Ramsperger U."/>
            <person name="Wedler H."/>
            <person name="Balke K."/>
            <person name="Wedler E."/>
            <person name="Peters S."/>
            <person name="van Staveren M."/>
            <person name="Dirkse W."/>
            <person name="Mooijman P."/>
            <person name="Klein Lankhorst R."/>
            <person name="Weitzenegger T."/>
            <person name="Bothe G."/>
            <person name="Rose M."/>
            <person name="Hauf J."/>
            <person name="Berneiser S."/>
            <person name="Hempel S."/>
            <person name="Feldpausch M."/>
            <person name="Lamberth S."/>
            <person name="Villarroel R."/>
            <person name="Gielen J."/>
            <person name="Ardiles W."/>
            <person name="Bents O."/>
            <person name="Lemcke K."/>
            <person name="Kolesov G."/>
            <person name="Mayer K.F.X."/>
            <person name="Rudd S."/>
            <person name="Schoof H."/>
            <person name="Schueller C."/>
            <person name="Zaccaria P."/>
            <person name="Mewes H.-W."/>
            <person name="Bevan M."/>
            <person name="Fransz P.F."/>
        </authorList>
    </citation>
    <scope>NUCLEOTIDE SEQUENCE [LARGE SCALE GENOMIC DNA]</scope>
    <source>
        <strain>cv. Columbia</strain>
    </source>
</reference>
<reference key="4">
    <citation type="journal article" date="2017" name="Plant J.">
        <title>Araport11: a complete reannotation of the Arabidopsis thaliana reference genome.</title>
        <authorList>
            <person name="Cheng C.Y."/>
            <person name="Krishnakumar V."/>
            <person name="Chan A.P."/>
            <person name="Thibaud-Nissen F."/>
            <person name="Schobel S."/>
            <person name="Town C.D."/>
        </authorList>
    </citation>
    <scope>GENOME REANNOTATION</scope>
    <source>
        <strain>cv. Columbia</strain>
    </source>
</reference>
<reference key="5">
    <citation type="submission" date="2006-03" db="EMBL/GenBank/DDBJ databases">
        <title>Arabidopsis ORF clones.</title>
        <authorList>
            <person name="Shinn P."/>
            <person name="Chen H."/>
            <person name="Kim C.J."/>
            <person name="Ecker J.R."/>
        </authorList>
    </citation>
    <scope>NUCLEOTIDE SEQUENCE [LARGE SCALE MRNA]</scope>
    <source>
        <strain>cv. Columbia</strain>
    </source>
</reference>
<reference key="6">
    <citation type="journal article" date="2002" name="Biochem. Biophys. Res. Commun.">
        <title>DNA-binding specificity of the ERF/AP2 domain of Arabidopsis DREBs, transcription factors involved in dehydration- and cold-inducible gene expression.</title>
        <authorList>
            <person name="Sakuma Y."/>
            <person name="Liu Q."/>
            <person name="Dubouzet J.G."/>
            <person name="Abe H."/>
            <person name="Shinozaki K."/>
            <person name="Yamaguchi-Shinozaki K."/>
        </authorList>
    </citation>
    <scope>INDUCTION</scope>
</reference>
<reference key="7">
    <citation type="journal article" date="2006" name="Plant Physiol.">
        <title>Genome-wide analysis of the ERF gene family in Arabidopsis and rice.</title>
        <authorList>
            <person name="Nakano T."/>
            <person name="Suzuki K."/>
            <person name="Fujimura T."/>
            <person name="Shinshi H."/>
        </authorList>
    </citation>
    <scope>GENE FAMILY</scope>
    <scope>NOMENCLATURE</scope>
</reference>
<protein>
    <recommendedName>
        <fullName>Ethylene-responsive transcription factor TINY</fullName>
    </recommendedName>
</protein>